<evidence type="ECO:0000255" key="1">
    <source>
        <dbReference type="HAMAP-Rule" id="MF_01527"/>
    </source>
</evidence>
<evidence type="ECO:0000256" key="2">
    <source>
        <dbReference type="SAM" id="MobiDB-lite"/>
    </source>
</evidence>
<dbReference type="EC" id="3.5.4.16" evidence="1"/>
<dbReference type="EMBL" id="CP000555">
    <property type="protein sequence ID" value="ABM95584.1"/>
    <property type="molecule type" value="Genomic_DNA"/>
</dbReference>
<dbReference type="RefSeq" id="WP_011830214.1">
    <property type="nucleotide sequence ID" value="NC_008825.1"/>
</dbReference>
<dbReference type="SMR" id="A2SJ45"/>
<dbReference type="STRING" id="420662.Mpe_A2630"/>
<dbReference type="KEGG" id="mpt:Mpe_A2630"/>
<dbReference type="eggNOG" id="COG1469">
    <property type="taxonomic scope" value="Bacteria"/>
</dbReference>
<dbReference type="HOGENOM" id="CLU_062816_1_1_4"/>
<dbReference type="UniPathway" id="UPA00848">
    <property type="reaction ID" value="UER00151"/>
</dbReference>
<dbReference type="Proteomes" id="UP000000366">
    <property type="component" value="Chromosome"/>
</dbReference>
<dbReference type="GO" id="GO:0003934">
    <property type="term" value="F:GTP cyclohydrolase I activity"/>
    <property type="evidence" value="ECO:0007669"/>
    <property type="project" value="UniProtKB-UniRule"/>
</dbReference>
<dbReference type="GO" id="GO:0046654">
    <property type="term" value="P:tetrahydrofolate biosynthetic process"/>
    <property type="evidence" value="ECO:0007669"/>
    <property type="project" value="UniProtKB-UniRule"/>
</dbReference>
<dbReference type="Gene3D" id="3.10.270.10">
    <property type="entry name" value="Urate Oxidase"/>
    <property type="match status" value="1"/>
</dbReference>
<dbReference type="HAMAP" id="MF_01527_B">
    <property type="entry name" value="GTP_cyclohydrol_B"/>
    <property type="match status" value="1"/>
</dbReference>
<dbReference type="InterPro" id="IPR022838">
    <property type="entry name" value="GTP_cyclohydrolase_FolE2"/>
</dbReference>
<dbReference type="InterPro" id="IPR003801">
    <property type="entry name" value="GTP_cyclohydrolase_FolE2/MptA"/>
</dbReference>
<dbReference type="PANTHER" id="PTHR36445">
    <property type="entry name" value="GTP CYCLOHYDROLASE MPTA"/>
    <property type="match status" value="1"/>
</dbReference>
<dbReference type="PANTHER" id="PTHR36445:SF1">
    <property type="entry name" value="GTP CYCLOHYDROLASE MPTA"/>
    <property type="match status" value="1"/>
</dbReference>
<dbReference type="Pfam" id="PF02649">
    <property type="entry name" value="GCHY-1"/>
    <property type="match status" value="1"/>
</dbReference>
<keyword id="KW-0378">Hydrolase</keyword>
<keyword id="KW-1185">Reference proteome</keyword>
<accession>A2SJ45</accession>
<sequence>MTHASALGLTQHIPDTQSERDERHLAIQRVGVKEVRYPLTVRIGEQLSPTVASWSLDVALPAEQKGTHMSRFVAWLDALSASGKPLDATALRDELAVMLDKLHAVEGRIEARFPFFIRKHAPVSGVSSLLDYQGAWIAEHRAGSGTTVWCEVVVPVKSLCPCSKEISDYGAHNQRSHVTIRAELMEPPGDRRRPPPPGGGESTRERPVVDSAVELGFEALVRFAEASASSEIWGLLKRPDEKWITERAYENPKFVEDLVRDVALRLNADARIGRYRVEVENFESIHNHSAFAVIERE</sequence>
<reference key="1">
    <citation type="journal article" date="2007" name="J. Bacteriol.">
        <title>Whole-genome analysis of the methyl tert-butyl ether-degrading beta-proteobacterium Methylibium petroleiphilum PM1.</title>
        <authorList>
            <person name="Kane S.R."/>
            <person name="Chakicherla A.Y."/>
            <person name="Chain P.S.G."/>
            <person name="Schmidt R."/>
            <person name="Shin M.W."/>
            <person name="Legler T.C."/>
            <person name="Scow K.M."/>
            <person name="Larimer F.W."/>
            <person name="Lucas S.M."/>
            <person name="Richardson P.M."/>
            <person name="Hristova K.R."/>
        </authorList>
    </citation>
    <scope>NUCLEOTIDE SEQUENCE [LARGE SCALE GENOMIC DNA]</scope>
    <source>
        <strain>ATCC BAA-1232 / LMG 22953 / PM1</strain>
    </source>
</reference>
<name>GCH4_METPP</name>
<proteinExistence type="inferred from homology"/>
<gene>
    <name evidence="1" type="primary">folE2</name>
    <name type="ordered locus">Mpe_A2630</name>
</gene>
<protein>
    <recommendedName>
        <fullName evidence="1">GTP cyclohydrolase FolE2</fullName>
        <ecNumber evidence="1">3.5.4.16</ecNumber>
    </recommendedName>
</protein>
<feature type="chain" id="PRO_0000289497" description="GTP cyclohydrolase FolE2">
    <location>
        <begin position="1"/>
        <end position="297"/>
    </location>
</feature>
<feature type="region of interest" description="Disordered" evidence="2">
    <location>
        <begin position="1"/>
        <end position="21"/>
    </location>
</feature>
<feature type="region of interest" description="Disordered" evidence="2">
    <location>
        <begin position="180"/>
        <end position="207"/>
    </location>
</feature>
<feature type="site" description="May be catalytically important" evidence="1">
    <location>
        <position position="160"/>
    </location>
</feature>
<organism>
    <name type="scientific">Methylibium petroleiphilum (strain ATCC BAA-1232 / LMG 22953 / PM1)</name>
    <dbReference type="NCBI Taxonomy" id="420662"/>
    <lineage>
        <taxon>Bacteria</taxon>
        <taxon>Pseudomonadati</taxon>
        <taxon>Pseudomonadota</taxon>
        <taxon>Betaproteobacteria</taxon>
        <taxon>Burkholderiales</taxon>
        <taxon>Sphaerotilaceae</taxon>
        <taxon>Methylibium</taxon>
    </lineage>
</organism>
<comment type="function">
    <text evidence="1">Converts GTP to 7,8-dihydroneopterin triphosphate.</text>
</comment>
<comment type="catalytic activity">
    <reaction evidence="1">
        <text>GTP + H2O = 7,8-dihydroneopterin 3'-triphosphate + formate + H(+)</text>
        <dbReference type="Rhea" id="RHEA:17473"/>
        <dbReference type="ChEBI" id="CHEBI:15377"/>
        <dbReference type="ChEBI" id="CHEBI:15378"/>
        <dbReference type="ChEBI" id="CHEBI:15740"/>
        <dbReference type="ChEBI" id="CHEBI:37565"/>
        <dbReference type="ChEBI" id="CHEBI:58462"/>
        <dbReference type="EC" id="3.5.4.16"/>
    </reaction>
</comment>
<comment type="pathway">
    <text evidence="1">Cofactor biosynthesis; 7,8-dihydroneopterin triphosphate biosynthesis; 7,8-dihydroneopterin triphosphate from GTP: step 1/1.</text>
</comment>
<comment type="similarity">
    <text evidence="1">Belongs to the GTP cyclohydrolase IV family.</text>
</comment>